<feature type="chain" id="PRO_0000225944" description="Chaperone protein DnaK">
    <location>
        <begin position="1"/>
        <end position="650"/>
    </location>
</feature>
<feature type="region of interest" description="Disordered" evidence="2">
    <location>
        <begin position="611"/>
        <end position="650"/>
    </location>
</feature>
<feature type="compositionally biased region" description="Low complexity" evidence="2">
    <location>
        <begin position="611"/>
        <end position="636"/>
    </location>
</feature>
<feature type="modified residue" description="Phosphothreonine; by autocatalysis" evidence="1">
    <location>
        <position position="200"/>
    </location>
</feature>
<feature type="sequence conflict" description="In Ref. 1; AAY63995." evidence="3" ref="1">
    <original>E</original>
    <variation>G</variation>
    <location>
        <position position="79"/>
    </location>
</feature>
<feature type="sequence conflict" description="In Ref. 1; AAY63995." evidence="3" ref="1">
    <original>G</original>
    <variation>C</variation>
    <location>
        <position position="132"/>
    </location>
</feature>
<feature type="sequence conflict" description="In Ref. 1; AAY63995." evidence="3" ref="1">
    <original>A</original>
    <variation>S</variation>
    <location>
        <position position="616"/>
    </location>
</feature>
<feature type="sequence conflict" description="In Ref. 1; AAY63995." evidence="3" ref="1">
    <original>A</original>
    <variation>V</variation>
    <location>
        <position position="619"/>
    </location>
</feature>
<feature type="sequence conflict" description="In Ref. 1; AAY63995." evidence="3" ref="1">
    <original>A</original>
    <variation>T</variation>
    <location>
        <position position="624"/>
    </location>
</feature>
<comment type="function">
    <text evidence="1">Acts as a chaperone.</text>
</comment>
<comment type="induction">
    <text evidence="1">By stress conditions e.g. heat shock.</text>
</comment>
<comment type="similarity">
    <text evidence="1">Belongs to the heat shock protein 70 family.</text>
</comment>
<reference key="1">
    <citation type="submission" date="2005-05" db="EMBL/GenBank/DDBJ databases">
        <title>Heat-shock proteins GroEL and DnaK are immunogenic in a patient and mice infected with Burkholderia mallei.</title>
        <authorList>
            <person name="Amemiya K."/>
            <person name="Meyers J.L."/>
            <person name="Norris S.L."/>
            <person name="DeShazer D."/>
            <person name="Waag D.M."/>
        </authorList>
    </citation>
    <scope>NUCLEOTIDE SEQUENCE [GENOMIC DNA]</scope>
    <source>
        <strain>ATCC 23344</strain>
    </source>
</reference>
<reference key="2">
    <citation type="journal article" date="2004" name="Proc. Natl. Acad. Sci. U.S.A.">
        <title>Structural flexibility in the Burkholderia mallei genome.</title>
        <authorList>
            <person name="Nierman W.C."/>
            <person name="DeShazer D."/>
            <person name="Kim H.S."/>
            <person name="Tettelin H."/>
            <person name="Nelson K.E."/>
            <person name="Feldblyum T.V."/>
            <person name="Ulrich R.L."/>
            <person name="Ronning C.M."/>
            <person name="Brinkac L.M."/>
            <person name="Daugherty S.C."/>
            <person name="Davidsen T.D."/>
            <person name="DeBoy R.T."/>
            <person name="Dimitrov G."/>
            <person name="Dodson R.J."/>
            <person name="Durkin A.S."/>
            <person name="Gwinn M.L."/>
            <person name="Haft D.H."/>
            <person name="Khouri H.M."/>
            <person name="Kolonay J.F."/>
            <person name="Madupu R."/>
            <person name="Mohammoud Y."/>
            <person name="Nelson W.C."/>
            <person name="Radune D."/>
            <person name="Romero C.M."/>
            <person name="Sarria S."/>
            <person name="Selengut J."/>
            <person name="Shamblin C."/>
            <person name="Sullivan S.A."/>
            <person name="White O."/>
            <person name="Yu Y."/>
            <person name="Zafar N."/>
            <person name="Zhou L."/>
            <person name="Fraser C.M."/>
        </authorList>
    </citation>
    <scope>NUCLEOTIDE SEQUENCE [LARGE SCALE GENOMIC DNA]</scope>
    <source>
        <strain>ATCC 23344</strain>
    </source>
</reference>
<accession>Q62HD5</accession>
<accession>Q4PPC1</accession>
<protein>
    <recommendedName>
        <fullName evidence="1">Chaperone protein DnaK</fullName>
    </recommendedName>
    <alternativeName>
        <fullName evidence="1">HSP70</fullName>
    </alternativeName>
    <alternativeName>
        <fullName evidence="1">Heat shock 70 kDa protein</fullName>
    </alternativeName>
    <alternativeName>
        <fullName evidence="1">Heat shock protein 70</fullName>
    </alternativeName>
</protein>
<organism>
    <name type="scientific">Burkholderia mallei (strain ATCC 23344)</name>
    <dbReference type="NCBI Taxonomy" id="243160"/>
    <lineage>
        <taxon>Bacteria</taxon>
        <taxon>Pseudomonadati</taxon>
        <taxon>Pseudomonadota</taxon>
        <taxon>Betaproteobacteria</taxon>
        <taxon>Burkholderiales</taxon>
        <taxon>Burkholderiaceae</taxon>
        <taxon>Burkholderia</taxon>
        <taxon>pseudomallei group</taxon>
    </lineage>
</organism>
<evidence type="ECO:0000255" key="1">
    <source>
        <dbReference type="HAMAP-Rule" id="MF_00332"/>
    </source>
</evidence>
<evidence type="ECO:0000256" key="2">
    <source>
        <dbReference type="SAM" id="MobiDB-lite"/>
    </source>
</evidence>
<evidence type="ECO:0000305" key="3"/>
<sequence>MGKIIGIDLGTTNSCVAIMEGNQVKVIENSEGARTTPSIIAYMDDNEVLVGAPAKRQSVTNPKNTLFAVKRLIGRRFEEKEVQKDIGLMPYAIIKADNGDAWVEAHGEKLAPPQVSAEVLRKMKKTAEDYLGEPVTEAVITVPAYFNDSQRQATKDAGRIAGLEVKRIINEPTAAALAFGLDKAEKGDRKIAVYDLGGGTFDVSIIEIADVDGEMQFEVLSTNGDTFLGGEDFDQRIIDYIIGEFKKEQGVDLSKDVLALQRLKEAAEKAKIELSSSQQTEINLPYITADASGPKHLNLKVTRAKLEALVEDLVERTIEPCRTAIKDAGVKVSDIDDVILVGGQTRMPKVQEKVKEFFGKEPRRDVNPDEAVAVGAAIQGQVLSGDRKDVLLLDVTPLSLGIETLGGVMTKMINKNTTIPTKHAQVYSTADDNQGAVTIKVFQGEREMAAGNKLLGEFNLEGIPPAPRGVPQIEVTFDIDANGILHVGAKDKATGKENKITIKANSGLSEAEIEKMVKDAEANAAEDHKLRELAESRNQGDALVHSTKKALTEYGDKLEAGEKEKIEAALKELEDVLKNASSDKAAIDAKVEAVATASQKLGEKMYADMQAQQAGAAGAAGAAAEGASAQGGAQPADDVVDADFKEVKKD</sequence>
<gene>
    <name evidence="1" type="primary">dnaK</name>
    <name type="ordered locus">BMA2326</name>
</gene>
<dbReference type="EMBL" id="DQ061984">
    <property type="protein sequence ID" value="AAY63995.1"/>
    <property type="molecule type" value="Genomic_DNA"/>
</dbReference>
<dbReference type="EMBL" id="CP000010">
    <property type="protein sequence ID" value="AAU49784.1"/>
    <property type="molecule type" value="Genomic_DNA"/>
</dbReference>
<dbReference type="RefSeq" id="WP_004194034.1">
    <property type="nucleotide sequence ID" value="NC_006348.1"/>
</dbReference>
<dbReference type="RefSeq" id="YP_103885.1">
    <property type="nucleotide sequence ID" value="NC_006348.1"/>
</dbReference>
<dbReference type="SMR" id="Q62HD5"/>
<dbReference type="GeneID" id="92980018"/>
<dbReference type="KEGG" id="bma:BMA2326"/>
<dbReference type="PATRIC" id="fig|243160.12.peg.2394"/>
<dbReference type="eggNOG" id="COG0443">
    <property type="taxonomic scope" value="Bacteria"/>
</dbReference>
<dbReference type="HOGENOM" id="CLU_005965_2_1_4"/>
<dbReference type="Proteomes" id="UP000006693">
    <property type="component" value="Chromosome 1"/>
</dbReference>
<dbReference type="GO" id="GO:0005524">
    <property type="term" value="F:ATP binding"/>
    <property type="evidence" value="ECO:0007669"/>
    <property type="project" value="UniProtKB-UniRule"/>
</dbReference>
<dbReference type="GO" id="GO:0140662">
    <property type="term" value="F:ATP-dependent protein folding chaperone"/>
    <property type="evidence" value="ECO:0007669"/>
    <property type="project" value="InterPro"/>
</dbReference>
<dbReference type="GO" id="GO:0051082">
    <property type="term" value="F:unfolded protein binding"/>
    <property type="evidence" value="ECO:0007669"/>
    <property type="project" value="InterPro"/>
</dbReference>
<dbReference type="CDD" id="cd10234">
    <property type="entry name" value="ASKHA_NBD_HSP70_DnaK-like"/>
    <property type="match status" value="1"/>
</dbReference>
<dbReference type="FunFam" id="2.60.34.10:FF:000014">
    <property type="entry name" value="Chaperone protein DnaK HSP70"/>
    <property type="match status" value="1"/>
</dbReference>
<dbReference type="FunFam" id="1.20.1270.10:FF:000001">
    <property type="entry name" value="Molecular chaperone DnaK"/>
    <property type="match status" value="1"/>
</dbReference>
<dbReference type="FunFam" id="3.30.420.40:FF:000004">
    <property type="entry name" value="Molecular chaperone DnaK"/>
    <property type="match status" value="1"/>
</dbReference>
<dbReference type="FunFam" id="3.90.640.10:FF:000003">
    <property type="entry name" value="Molecular chaperone DnaK"/>
    <property type="match status" value="1"/>
</dbReference>
<dbReference type="Gene3D" id="1.20.1270.10">
    <property type="match status" value="1"/>
</dbReference>
<dbReference type="Gene3D" id="3.30.420.40">
    <property type="match status" value="2"/>
</dbReference>
<dbReference type="Gene3D" id="3.90.640.10">
    <property type="entry name" value="Actin, Chain A, domain 4"/>
    <property type="match status" value="1"/>
</dbReference>
<dbReference type="Gene3D" id="2.60.34.10">
    <property type="entry name" value="Substrate Binding Domain Of DNAk, Chain A, domain 1"/>
    <property type="match status" value="1"/>
</dbReference>
<dbReference type="HAMAP" id="MF_00332">
    <property type="entry name" value="DnaK"/>
    <property type="match status" value="1"/>
</dbReference>
<dbReference type="InterPro" id="IPR043129">
    <property type="entry name" value="ATPase_NBD"/>
</dbReference>
<dbReference type="InterPro" id="IPR012725">
    <property type="entry name" value="Chaperone_DnaK"/>
</dbReference>
<dbReference type="InterPro" id="IPR018181">
    <property type="entry name" value="Heat_shock_70_CS"/>
</dbReference>
<dbReference type="InterPro" id="IPR029048">
    <property type="entry name" value="HSP70_C_sf"/>
</dbReference>
<dbReference type="InterPro" id="IPR029047">
    <property type="entry name" value="HSP70_peptide-bd_sf"/>
</dbReference>
<dbReference type="InterPro" id="IPR013126">
    <property type="entry name" value="Hsp_70_fam"/>
</dbReference>
<dbReference type="NCBIfam" id="NF001413">
    <property type="entry name" value="PRK00290.1"/>
    <property type="match status" value="1"/>
</dbReference>
<dbReference type="NCBIfam" id="NF003520">
    <property type="entry name" value="PRK05183.1"/>
    <property type="match status" value="1"/>
</dbReference>
<dbReference type="NCBIfam" id="TIGR02350">
    <property type="entry name" value="prok_dnaK"/>
    <property type="match status" value="1"/>
</dbReference>
<dbReference type="PANTHER" id="PTHR19375">
    <property type="entry name" value="HEAT SHOCK PROTEIN 70KDA"/>
    <property type="match status" value="1"/>
</dbReference>
<dbReference type="Pfam" id="PF00012">
    <property type="entry name" value="HSP70"/>
    <property type="match status" value="1"/>
</dbReference>
<dbReference type="PRINTS" id="PR00301">
    <property type="entry name" value="HEATSHOCK70"/>
</dbReference>
<dbReference type="SUPFAM" id="SSF53067">
    <property type="entry name" value="Actin-like ATPase domain"/>
    <property type="match status" value="2"/>
</dbReference>
<dbReference type="SUPFAM" id="SSF100934">
    <property type="entry name" value="Heat shock protein 70kD (HSP70), C-terminal subdomain"/>
    <property type="match status" value="1"/>
</dbReference>
<dbReference type="SUPFAM" id="SSF100920">
    <property type="entry name" value="Heat shock protein 70kD (HSP70), peptide-binding domain"/>
    <property type="match status" value="1"/>
</dbReference>
<dbReference type="PROSITE" id="PS00297">
    <property type="entry name" value="HSP70_1"/>
    <property type="match status" value="1"/>
</dbReference>
<dbReference type="PROSITE" id="PS00329">
    <property type="entry name" value="HSP70_2"/>
    <property type="match status" value="1"/>
</dbReference>
<dbReference type="PROSITE" id="PS01036">
    <property type="entry name" value="HSP70_3"/>
    <property type="match status" value="1"/>
</dbReference>
<name>DNAK_BURMA</name>
<proteinExistence type="inferred from homology"/>
<keyword id="KW-0067">ATP-binding</keyword>
<keyword id="KW-0143">Chaperone</keyword>
<keyword id="KW-0547">Nucleotide-binding</keyword>
<keyword id="KW-0597">Phosphoprotein</keyword>
<keyword id="KW-1185">Reference proteome</keyword>
<keyword id="KW-0346">Stress response</keyword>